<feature type="chain" id="PRO_0000372791" description="Uncharacterized transporter C530.02">
    <location>
        <begin position="1"/>
        <end position="541"/>
    </location>
</feature>
<feature type="transmembrane region" description="Helical" evidence="1">
    <location>
        <begin position="99"/>
        <end position="119"/>
    </location>
</feature>
<feature type="transmembrane region" description="Helical" evidence="1">
    <location>
        <begin position="131"/>
        <end position="153"/>
    </location>
</feature>
<feature type="transmembrane region" description="Helical" evidence="1">
    <location>
        <begin position="165"/>
        <end position="185"/>
    </location>
</feature>
<feature type="transmembrane region" description="Helical" evidence="1">
    <location>
        <begin position="187"/>
        <end position="207"/>
    </location>
</feature>
<feature type="transmembrane region" description="Helical" evidence="1">
    <location>
        <begin position="224"/>
        <end position="244"/>
    </location>
</feature>
<feature type="transmembrane region" description="Helical" evidence="1">
    <location>
        <begin position="256"/>
        <end position="276"/>
    </location>
</feature>
<feature type="transmembrane region" description="Helical" evidence="1">
    <location>
        <begin position="325"/>
        <end position="345"/>
    </location>
</feature>
<feature type="transmembrane region" description="Helical" evidence="1">
    <location>
        <begin position="367"/>
        <end position="387"/>
    </location>
</feature>
<feature type="transmembrane region" description="Helical" evidence="1">
    <location>
        <begin position="409"/>
        <end position="429"/>
    </location>
</feature>
<feature type="transmembrane region" description="Helical" evidence="1">
    <location>
        <begin position="439"/>
        <end position="459"/>
    </location>
</feature>
<feature type="transmembrane region" description="Helical" evidence="1">
    <location>
        <begin position="472"/>
        <end position="494"/>
    </location>
</feature>
<feature type="transmembrane region" description="Helical" evidence="1">
    <location>
        <begin position="508"/>
        <end position="528"/>
    </location>
</feature>
<name>YN22_SCHPO</name>
<protein>
    <recommendedName>
        <fullName>Uncharacterized transporter C530.02</fullName>
    </recommendedName>
</protein>
<evidence type="ECO:0000255" key="1"/>
<evidence type="ECO:0000312" key="2">
    <source>
        <dbReference type="EMBL" id="CAA19168.1"/>
    </source>
</evidence>
<comment type="subcellular location">
    <subcellularLocation>
        <location evidence="1">Membrane</location>
        <topology evidence="1">Multi-pass membrane protein</topology>
    </subcellularLocation>
</comment>
<comment type="similarity">
    <text evidence="1">Belongs to the major facilitator superfamily. CAR1 family.</text>
</comment>
<keyword id="KW-0472">Membrane</keyword>
<keyword id="KW-1185">Reference proteome</keyword>
<keyword id="KW-0812">Transmembrane</keyword>
<keyword id="KW-1133">Transmembrane helix</keyword>
<keyword id="KW-0813">Transport</keyword>
<gene>
    <name type="ORF">SPBC530.02</name>
</gene>
<proteinExistence type="inferred from homology"/>
<accession>O59738</accession>
<organism>
    <name type="scientific">Schizosaccharomyces pombe (strain 972 / ATCC 24843)</name>
    <name type="common">Fission yeast</name>
    <dbReference type="NCBI Taxonomy" id="284812"/>
    <lineage>
        <taxon>Eukaryota</taxon>
        <taxon>Fungi</taxon>
        <taxon>Dikarya</taxon>
        <taxon>Ascomycota</taxon>
        <taxon>Taphrinomycotina</taxon>
        <taxon>Schizosaccharomycetes</taxon>
        <taxon>Schizosaccharomycetales</taxon>
        <taxon>Schizosaccharomycetaceae</taxon>
        <taxon>Schizosaccharomyces</taxon>
    </lineage>
</organism>
<sequence>MDLYLLASGRKFGVVKSDCISNNGVNVKDVGNALNEGVVGAIDATRKMVVSLGTVMPEIQKCGVTFEESSEDVSDFYLVRWDSIDDPLNPKNWPMWKKWIVVVQISLIAFVVTFGSSVYSSGIGNVSMDFGVSISVSSLGSCVFLVGFGFGSLPFAPLSGIYGRFVVYFCTLLMFTLFQIGGGCAQNIWTLVILRFFQGFFGSTPLSNCGGTLSDLFTPIQRTYVLPGFCTFPFLGPIFGPIIGDFICQSYLGWCWVFWINMIMGAVVIVIIFFFMPETHGDTILDYKARYLRNKTRNMKWHTIHERQRNPRSAIYQACTDSVSLLITEPIVVCFTLYLTVVYIIGYIDFEGYPIVFAKYSFDQGEIGLSFIGIGIGIVLAGACTPIIYVHYNRVYTRRNGVMSPEDRLYPLFFGSIMLPISMFWFAWTCYPYHPYVHWIVPLISSIFFGWSLLFVFFVSYNYIIDSYQKLAASALAAATLVRYAASGGMSLVGRPMYVNLGDHWATSLLGFISVGMIPIPFLFFIYGKKIRGLSKHAYKL</sequence>
<dbReference type="EMBL" id="CU329671">
    <property type="protein sequence ID" value="CAA19168.1"/>
    <property type="molecule type" value="Genomic_DNA"/>
</dbReference>
<dbReference type="PIR" id="T40518">
    <property type="entry name" value="T40518"/>
</dbReference>
<dbReference type="RefSeq" id="NP_595315.1">
    <property type="nucleotide sequence ID" value="NM_001021222.2"/>
</dbReference>
<dbReference type="FunCoup" id="O59738">
    <property type="interactions" value="8"/>
</dbReference>
<dbReference type="STRING" id="284812.O59738"/>
<dbReference type="PaxDb" id="4896-SPBC530.02.1"/>
<dbReference type="EnsemblFungi" id="SPBC530.02.1">
    <property type="protein sequence ID" value="SPBC530.02.1:pep"/>
    <property type="gene ID" value="SPBC530.02"/>
</dbReference>
<dbReference type="KEGG" id="spo:2540897"/>
<dbReference type="PomBase" id="SPBC530.02"/>
<dbReference type="VEuPathDB" id="FungiDB:SPBC530.02"/>
<dbReference type="eggNOG" id="KOG0255">
    <property type="taxonomic scope" value="Eukaryota"/>
</dbReference>
<dbReference type="HOGENOM" id="CLU_008455_11_1_1"/>
<dbReference type="InParanoid" id="O59738"/>
<dbReference type="PhylomeDB" id="O59738"/>
<dbReference type="PRO" id="PR:O59738"/>
<dbReference type="Proteomes" id="UP000002485">
    <property type="component" value="Chromosome II"/>
</dbReference>
<dbReference type="GO" id="GO:0005886">
    <property type="term" value="C:plasma membrane"/>
    <property type="evidence" value="ECO:0000318"/>
    <property type="project" value="GO_Central"/>
</dbReference>
<dbReference type="GO" id="GO:0022857">
    <property type="term" value="F:transmembrane transporter activity"/>
    <property type="evidence" value="ECO:0000318"/>
    <property type="project" value="GO_Central"/>
</dbReference>
<dbReference type="GO" id="GO:0055085">
    <property type="term" value="P:transmembrane transport"/>
    <property type="evidence" value="ECO:0000318"/>
    <property type="project" value="GO_Central"/>
</dbReference>
<dbReference type="CDD" id="cd17323">
    <property type="entry name" value="MFS_Tpo1_MDR_like"/>
    <property type="match status" value="1"/>
</dbReference>
<dbReference type="FunFam" id="1.20.1250.20:FF:000082">
    <property type="entry name" value="MFS multidrug transporter, putative"/>
    <property type="match status" value="1"/>
</dbReference>
<dbReference type="Gene3D" id="1.20.1250.20">
    <property type="entry name" value="MFS general substrate transporter like domains"/>
    <property type="match status" value="1"/>
</dbReference>
<dbReference type="InterPro" id="IPR011701">
    <property type="entry name" value="MFS"/>
</dbReference>
<dbReference type="InterPro" id="IPR020846">
    <property type="entry name" value="MFS_dom"/>
</dbReference>
<dbReference type="InterPro" id="IPR036259">
    <property type="entry name" value="MFS_trans_sf"/>
</dbReference>
<dbReference type="PANTHER" id="PTHR23502">
    <property type="entry name" value="MAJOR FACILITATOR SUPERFAMILY"/>
    <property type="match status" value="1"/>
</dbReference>
<dbReference type="PANTHER" id="PTHR23502:SF47">
    <property type="entry name" value="MAJOR FACILITATOR SUPERFAMILY (MFS) PROFILE DOMAIN-CONTAINING PROTEIN-RELATED"/>
    <property type="match status" value="1"/>
</dbReference>
<dbReference type="Pfam" id="PF07690">
    <property type="entry name" value="MFS_1"/>
    <property type="match status" value="1"/>
</dbReference>
<dbReference type="SUPFAM" id="SSF103473">
    <property type="entry name" value="MFS general substrate transporter"/>
    <property type="match status" value="1"/>
</dbReference>
<dbReference type="PROSITE" id="PS50850">
    <property type="entry name" value="MFS"/>
    <property type="match status" value="1"/>
</dbReference>
<reference evidence="2" key="1">
    <citation type="journal article" date="2002" name="Nature">
        <title>The genome sequence of Schizosaccharomyces pombe.</title>
        <authorList>
            <person name="Wood V."/>
            <person name="Gwilliam R."/>
            <person name="Rajandream M.A."/>
            <person name="Lyne M.H."/>
            <person name="Lyne R."/>
            <person name="Stewart A."/>
            <person name="Sgouros J.G."/>
            <person name="Peat N."/>
            <person name="Hayles J."/>
            <person name="Baker S.G."/>
            <person name="Basham D."/>
            <person name="Bowman S."/>
            <person name="Brooks K."/>
            <person name="Brown D."/>
            <person name="Brown S."/>
            <person name="Chillingworth T."/>
            <person name="Churcher C.M."/>
            <person name="Collins M."/>
            <person name="Connor R."/>
            <person name="Cronin A."/>
            <person name="Davis P."/>
            <person name="Feltwell T."/>
            <person name="Fraser A."/>
            <person name="Gentles S."/>
            <person name="Goble A."/>
            <person name="Hamlin N."/>
            <person name="Harris D.E."/>
            <person name="Hidalgo J."/>
            <person name="Hodgson G."/>
            <person name="Holroyd S."/>
            <person name="Hornsby T."/>
            <person name="Howarth S."/>
            <person name="Huckle E.J."/>
            <person name="Hunt S."/>
            <person name="Jagels K."/>
            <person name="James K.D."/>
            <person name="Jones L."/>
            <person name="Jones M."/>
            <person name="Leather S."/>
            <person name="McDonald S."/>
            <person name="McLean J."/>
            <person name="Mooney P."/>
            <person name="Moule S."/>
            <person name="Mungall K.L."/>
            <person name="Murphy L.D."/>
            <person name="Niblett D."/>
            <person name="Odell C."/>
            <person name="Oliver K."/>
            <person name="O'Neil S."/>
            <person name="Pearson D."/>
            <person name="Quail M.A."/>
            <person name="Rabbinowitsch E."/>
            <person name="Rutherford K.M."/>
            <person name="Rutter S."/>
            <person name="Saunders D."/>
            <person name="Seeger K."/>
            <person name="Sharp S."/>
            <person name="Skelton J."/>
            <person name="Simmonds M.N."/>
            <person name="Squares R."/>
            <person name="Squares S."/>
            <person name="Stevens K."/>
            <person name="Taylor K."/>
            <person name="Taylor R.G."/>
            <person name="Tivey A."/>
            <person name="Walsh S.V."/>
            <person name="Warren T."/>
            <person name="Whitehead S."/>
            <person name="Woodward J.R."/>
            <person name="Volckaert G."/>
            <person name="Aert R."/>
            <person name="Robben J."/>
            <person name="Grymonprez B."/>
            <person name="Weltjens I."/>
            <person name="Vanstreels E."/>
            <person name="Rieger M."/>
            <person name="Schaefer M."/>
            <person name="Mueller-Auer S."/>
            <person name="Gabel C."/>
            <person name="Fuchs M."/>
            <person name="Duesterhoeft A."/>
            <person name="Fritzc C."/>
            <person name="Holzer E."/>
            <person name="Moestl D."/>
            <person name="Hilbert H."/>
            <person name="Borzym K."/>
            <person name="Langer I."/>
            <person name="Beck A."/>
            <person name="Lehrach H."/>
            <person name="Reinhardt R."/>
            <person name="Pohl T.M."/>
            <person name="Eger P."/>
            <person name="Zimmermann W."/>
            <person name="Wedler H."/>
            <person name="Wambutt R."/>
            <person name="Purnelle B."/>
            <person name="Goffeau A."/>
            <person name="Cadieu E."/>
            <person name="Dreano S."/>
            <person name="Gloux S."/>
            <person name="Lelaure V."/>
            <person name="Mottier S."/>
            <person name="Galibert F."/>
            <person name="Aves S.J."/>
            <person name="Xiang Z."/>
            <person name="Hunt C."/>
            <person name="Moore K."/>
            <person name="Hurst S.M."/>
            <person name="Lucas M."/>
            <person name="Rochet M."/>
            <person name="Gaillardin C."/>
            <person name="Tallada V.A."/>
            <person name="Garzon A."/>
            <person name="Thode G."/>
            <person name="Daga R.R."/>
            <person name="Cruzado L."/>
            <person name="Jimenez J."/>
            <person name="Sanchez M."/>
            <person name="del Rey F."/>
            <person name="Benito J."/>
            <person name="Dominguez A."/>
            <person name="Revuelta J.L."/>
            <person name="Moreno S."/>
            <person name="Armstrong J."/>
            <person name="Forsburg S.L."/>
            <person name="Cerutti L."/>
            <person name="Lowe T."/>
            <person name="McCombie W.R."/>
            <person name="Paulsen I."/>
            <person name="Potashkin J."/>
            <person name="Shpakovski G.V."/>
            <person name="Ussery D."/>
            <person name="Barrell B.G."/>
            <person name="Nurse P."/>
        </authorList>
    </citation>
    <scope>NUCLEOTIDE SEQUENCE [LARGE SCALE GENOMIC DNA]</scope>
    <source>
        <strain>972 / ATCC 24843</strain>
    </source>
</reference>